<comment type="function">
    <text evidence="9">Component of the ribosome, a large ribonucleoprotein complex responsible for the synthesis of proteins in the cell. The small ribosomal subunit (SSU) binds messenger RNAs (mRNAs) and translates the encoded message by selecting cognate aminoacyl-transfer RNA (tRNA) molecules. The large subunit (LSU) contains the ribosomal catalytic site termed the peptidyl transferase center (PTC), which catalyzes the formation of peptide bonds, thereby polymerizing the amino acids delivered by tRNAs into a polypeptide chain. The nascent polypeptides leave the ribosome through a tunnel in the LSU and interact with protein factors that function in enzymatic processing, targeting, and the membrane insertion of nascent chains at the exit of the ribosomal tunnel.</text>
</comment>
<comment type="subunit">
    <text evidence="5 10">Component of the large ribosomal subunit (LSU). Mature yeast ribosomes consist of a small (40S) and a large (60S) subunit. The 40S small subunit contains 1 molecule of ribosomal RNA (18S rRNA) and 33 different proteins (encoded by 57 genes). The large 60S subunit contains 3 rRNA molecules (25S, 5.8S and 5S rRNA) and 46 different proteins (encoded by 81 genes) (PubMed:22096102, PubMed:9559554).</text>
</comment>
<comment type="subcellular location">
    <subcellularLocation>
        <location evidence="3 5">Cytoplasm</location>
    </subcellularLocation>
</comment>
<comment type="PTM">
    <text evidence="2">N-terminally acetylated by acetyltransferase NatA.</text>
</comment>
<comment type="miscellaneous">
    <text evidence="4">Present with 37100 molecules/cell in log phase SD medium.</text>
</comment>
<comment type="miscellaneous">
    <text evidence="8">There are 2 genes for eL6 in yeast.</text>
</comment>
<comment type="similarity">
    <text evidence="8">Belongs to the eukaryotic ribosomal protein eL6 family.</text>
</comment>
<organism>
    <name type="scientific">Saccharomyces cerevisiae (strain ATCC 204508 / S288c)</name>
    <name type="common">Baker's yeast</name>
    <dbReference type="NCBI Taxonomy" id="559292"/>
    <lineage>
        <taxon>Eukaryota</taxon>
        <taxon>Fungi</taxon>
        <taxon>Dikarya</taxon>
        <taxon>Ascomycota</taxon>
        <taxon>Saccharomycotina</taxon>
        <taxon>Saccharomycetes</taxon>
        <taxon>Saccharomycetales</taxon>
        <taxon>Saccharomycetaceae</taxon>
        <taxon>Saccharomyces</taxon>
    </lineage>
</organism>
<accession>Q02326</accession>
<accession>D6VZA0</accession>
<dbReference type="EMBL" id="D10225">
    <property type="protein sequence ID" value="BAA01077.1"/>
    <property type="molecule type" value="Genomic_DNA"/>
</dbReference>
<dbReference type="EMBL" id="Z46373">
    <property type="protein sequence ID" value="CAA86505.1"/>
    <property type="molecule type" value="Genomic_DNA"/>
</dbReference>
<dbReference type="EMBL" id="BK006946">
    <property type="protein sequence ID" value="DAA09824.1"/>
    <property type="molecule type" value="Genomic_DNA"/>
</dbReference>
<dbReference type="PIR" id="S28944">
    <property type="entry name" value="S28944"/>
</dbReference>
<dbReference type="RefSeq" id="NP_013638.1">
    <property type="nucleotide sequence ID" value="NM_001182432.1"/>
</dbReference>
<dbReference type="PDB" id="3J6X">
    <property type="method" value="EM"/>
    <property type="resolution" value="6.10 A"/>
    <property type="chains" value="L6=1-176"/>
</dbReference>
<dbReference type="PDB" id="3J6Y">
    <property type="method" value="EM"/>
    <property type="resolution" value="6.10 A"/>
    <property type="chains" value="L6=1-176"/>
</dbReference>
<dbReference type="PDB" id="3J77">
    <property type="method" value="EM"/>
    <property type="resolution" value="6.20 A"/>
    <property type="chains" value="L6=1-176"/>
</dbReference>
<dbReference type="PDB" id="3J78">
    <property type="method" value="EM"/>
    <property type="resolution" value="6.30 A"/>
    <property type="chains" value="L6=1-176"/>
</dbReference>
<dbReference type="PDB" id="3JBS">
    <property type="method" value="EM"/>
    <property type="resolution" value="2.90 A"/>
    <property type="chains" value="A=1-176"/>
</dbReference>
<dbReference type="PDB" id="3JCT">
    <property type="method" value="EM"/>
    <property type="resolution" value="3.08 A"/>
    <property type="chains" value="E=1-176"/>
</dbReference>
<dbReference type="PDB" id="4U3M">
    <property type="method" value="X-ray"/>
    <property type="resolution" value="3.00 A"/>
    <property type="chains" value="L6/l6=2-176"/>
</dbReference>
<dbReference type="PDB" id="4U3N">
    <property type="method" value="X-ray"/>
    <property type="resolution" value="3.20 A"/>
    <property type="chains" value="L6/l6=2-176"/>
</dbReference>
<dbReference type="PDB" id="4U3U">
    <property type="method" value="X-ray"/>
    <property type="resolution" value="2.90 A"/>
    <property type="chains" value="L6/l6=2-176"/>
</dbReference>
<dbReference type="PDB" id="4U4N">
    <property type="method" value="X-ray"/>
    <property type="resolution" value="3.10 A"/>
    <property type="chains" value="L6/l6=2-176"/>
</dbReference>
<dbReference type="PDB" id="4U4O">
    <property type="method" value="X-ray"/>
    <property type="resolution" value="3.60 A"/>
    <property type="chains" value="L6/l6=2-176"/>
</dbReference>
<dbReference type="PDB" id="4U4Q">
    <property type="method" value="X-ray"/>
    <property type="resolution" value="3.00 A"/>
    <property type="chains" value="L6/l6=2-176"/>
</dbReference>
<dbReference type="PDB" id="4U4R">
    <property type="method" value="X-ray"/>
    <property type="resolution" value="2.80 A"/>
    <property type="chains" value="L6/l6=2-176"/>
</dbReference>
<dbReference type="PDB" id="4U4U">
    <property type="method" value="X-ray"/>
    <property type="resolution" value="3.00 A"/>
    <property type="chains" value="L6/l6=2-176"/>
</dbReference>
<dbReference type="PDB" id="4U4Y">
    <property type="method" value="X-ray"/>
    <property type="resolution" value="3.20 A"/>
    <property type="chains" value="L6/l6=2-176"/>
</dbReference>
<dbReference type="PDB" id="4U4Z">
    <property type="method" value="X-ray"/>
    <property type="resolution" value="3.10 A"/>
    <property type="chains" value="L6/l6=2-176"/>
</dbReference>
<dbReference type="PDB" id="4U50">
    <property type="method" value="X-ray"/>
    <property type="resolution" value="3.20 A"/>
    <property type="chains" value="L6/l6=2-176"/>
</dbReference>
<dbReference type="PDB" id="4U51">
    <property type="method" value="X-ray"/>
    <property type="resolution" value="3.20 A"/>
    <property type="chains" value="L6/l6=2-176"/>
</dbReference>
<dbReference type="PDB" id="4U52">
    <property type="method" value="X-ray"/>
    <property type="resolution" value="3.00 A"/>
    <property type="chains" value="L6/l6=2-176"/>
</dbReference>
<dbReference type="PDB" id="4U53">
    <property type="method" value="X-ray"/>
    <property type="resolution" value="3.30 A"/>
    <property type="chains" value="L6/l6=2-176"/>
</dbReference>
<dbReference type="PDB" id="4U55">
    <property type="method" value="X-ray"/>
    <property type="resolution" value="3.20 A"/>
    <property type="chains" value="L6/l6=2-176"/>
</dbReference>
<dbReference type="PDB" id="4U56">
    <property type="method" value="X-ray"/>
    <property type="resolution" value="3.45 A"/>
    <property type="chains" value="L6/l6=2-176"/>
</dbReference>
<dbReference type="PDB" id="4U6F">
    <property type="method" value="X-ray"/>
    <property type="resolution" value="3.10 A"/>
    <property type="chains" value="L6/l6=2-176"/>
</dbReference>
<dbReference type="PDB" id="4V6I">
    <property type="method" value="EM"/>
    <property type="resolution" value="8.80 A"/>
    <property type="chains" value="BG=1-176"/>
</dbReference>
<dbReference type="PDB" id="4V7F">
    <property type="method" value="EM"/>
    <property type="resolution" value="8.70 A"/>
    <property type="chains" value="G=1-176"/>
</dbReference>
<dbReference type="PDB" id="4V7R">
    <property type="method" value="X-ray"/>
    <property type="resolution" value="4.00 A"/>
    <property type="chains" value="BF/DF=1-176"/>
</dbReference>
<dbReference type="PDB" id="4V88">
    <property type="method" value="X-ray"/>
    <property type="resolution" value="3.00 A"/>
    <property type="chains" value="BE/DE=1-176"/>
</dbReference>
<dbReference type="PDB" id="4V8T">
    <property type="method" value="EM"/>
    <property type="resolution" value="8.10 A"/>
    <property type="chains" value="E=1-176"/>
</dbReference>
<dbReference type="PDB" id="4V8Y">
    <property type="method" value="EM"/>
    <property type="resolution" value="4.30 A"/>
    <property type="chains" value="BE=2-176"/>
</dbReference>
<dbReference type="PDB" id="4V8Z">
    <property type="method" value="EM"/>
    <property type="resolution" value="6.60 A"/>
    <property type="chains" value="BE=2-176"/>
</dbReference>
<dbReference type="PDB" id="4V91">
    <property type="method" value="EM"/>
    <property type="resolution" value="3.70 A"/>
    <property type="chains" value="E=1-176"/>
</dbReference>
<dbReference type="PDB" id="5APN">
    <property type="method" value="EM"/>
    <property type="resolution" value="3.91 A"/>
    <property type="chains" value="E=1-176"/>
</dbReference>
<dbReference type="PDB" id="5DAT">
    <property type="method" value="X-ray"/>
    <property type="resolution" value="3.15 A"/>
    <property type="chains" value="L6/l6=2-176"/>
</dbReference>
<dbReference type="PDB" id="5DC3">
    <property type="method" value="X-ray"/>
    <property type="resolution" value="3.25 A"/>
    <property type="chains" value="L6/l6=2-176"/>
</dbReference>
<dbReference type="PDB" id="5DGE">
    <property type="method" value="X-ray"/>
    <property type="resolution" value="3.45 A"/>
    <property type="chains" value="L6/l6=2-176"/>
</dbReference>
<dbReference type="PDB" id="5DGF">
    <property type="method" value="X-ray"/>
    <property type="resolution" value="3.30 A"/>
    <property type="chains" value="L6/l6=2-176"/>
</dbReference>
<dbReference type="PDB" id="5DGV">
    <property type="method" value="X-ray"/>
    <property type="resolution" value="3.10 A"/>
    <property type="chains" value="L6/l6=2-176"/>
</dbReference>
<dbReference type="PDB" id="5FCI">
    <property type="method" value="X-ray"/>
    <property type="resolution" value="3.40 A"/>
    <property type="chains" value="L6/l6=2-176"/>
</dbReference>
<dbReference type="PDB" id="5FCJ">
    <property type="method" value="X-ray"/>
    <property type="resolution" value="3.10 A"/>
    <property type="chains" value="L6/l6=2-176"/>
</dbReference>
<dbReference type="PDB" id="5GAK">
    <property type="method" value="EM"/>
    <property type="resolution" value="3.88 A"/>
    <property type="chains" value="I=1-176"/>
</dbReference>
<dbReference type="PDB" id="5H4P">
    <property type="method" value="EM"/>
    <property type="resolution" value="3.07 A"/>
    <property type="chains" value="E=1-176"/>
</dbReference>
<dbReference type="PDB" id="5I4L">
    <property type="method" value="X-ray"/>
    <property type="resolution" value="3.10 A"/>
    <property type="chains" value="L6/l6=1-176"/>
</dbReference>
<dbReference type="PDB" id="5JCS">
    <property type="method" value="EM"/>
    <property type="resolution" value="9.50 A"/>
    <property type="chains" value="E=1-176"/>
</dbReference>
<dbReference type="PDB" id="5JUO">
    <property type="method" value="EM"/>
    <property type="resolution" value="4.00 A"/>
    <property type="chains" value="J=1-176"/>
</dbReference>
<dbReference type="PDB" id="5JUP">
    <property type="method" value="EM"/>
    <property type="resolution" value="3.50 A"/>
    <property type="chains" value="J=1-176"/>
</dbReference>
<dbReference type="PDB" id="5JUS">
    <property type="method" value="EM"/>
    <property type="resolution" value="4.20 A"/>
    <property type="chains" value="J=1-176"/>
</dbReference>
<dbReference type="PDB" id="5JUT">
    <property type="method" value="EM"/>
    <property type="resolution" value="4.00 A"/>
    <property type="chains" value="J=1-176"/>
</dbReference>
<dbReference type="PDB" id="5JUU">
    <property type="method" value="EM"/>
    <property type="resolution" value="4.00 A"/>
    <property type="chains" value="J=1-176"/>
</dbReference>
<dbReference type="PDB" id="5LYB">
    <property type="method" value="X-ray"/>
    <property type="resolution" value="3.25 A"/>
    <property type="chains" value="L6/l6=2-176"/>
</dbReference>
<dbReference type="PDB" id="5M1J">
    <property type="method" value="EM"/>
    <property type="resolution" value="3.30 A"/>
    <property type="chains" value="E5=2-176"/>
</dbReference>
<dbReference type="PDB" id="5MC6">
    <property type="method" value="EM"/>
    <property type="resolution" value="3.80 A"/>
    <property type="chains" value="BM=1-176"/>
</dbReference>
<dbReference type="PDB" id="5MEI">
    <property type="method" value="X-ray"/>
    <property type="resolution" value="3.50 A"/>
    <property type="chains" value="CH/n=2-176"/>
</dbReference>
<dbReference type="PDB" id="5NDG">
    <property type="method" value="X-ray"/>
    <property type="resolution" value="3.70 A"/>
    <property type="chains" value="L6/l6=1-176"/>
</dbReference>
<dbReference type="PDB" id="5NDV">
    <property type="method" value="X-ray"/>
    <property type="resolution" value="3.30 A"/>
    <property type="chains" value="L6/l6=1-176"/>
</dbReference>
<dbReference type="PDB" id="5NDW">
    <property type="method" value="X-ray"/>
    <property type="resolution" value="3.70 A"/>
    <property type="chains" value="L6/l6=1-176"/>
</dbReference>
<dbReference type="PDB" id="5OBM">
    <property type="method" value="X-ray"/>
    <property type="resolution" value="3.40 A"/>
    <property type="chains" value="L6/l6=1-176"/>
</dbReference>
<dbReference type="PDB" id="5ON6">
    <property type="method" value="X-ray"/>
    <property type="resolution" value="3.10 A"/>
    <property type="chains" value="CH/n=2-176"/>
</dbReference>
<dbReference type="PDB" id="5T62">
    <property type="method" value="EM"/>
    <property type="resolution" value="3.30 A"/>
    <property type="chains" value="H=1-176"/>
</dbReference>
<dbReference type="PDB" id="5T6R">
    <property type="method" value="EM"/>
    <property type="resolution" value="4.50 A"/>
    <property type="chains" value="H=1-176"/>
</dbReference>
<dbReference type="PDB" id="5TBW">
    <property type="method" value="X-ray"/>
    <property type="resolution" value="3.00 A"/>
    <property type="chains" value="CH/n=2-176"/>
</dbReference>
<dbReference type="PDB" id="5TGA">
    <property type="method" value="X-ray"/>
    <property type="resolution" value="3.30 A"/>
    <property type="chains" value="L6/l6=2-176"/>
</dbReference>
<dbReference type="PDB" id="5TGM">
    <property type="method" value="X-ray"/>
    <property type="resolution" value="3.50 A"/>
    <property type="chains" value="L6/l6=2-176"/>
</dbReference>
<dbReference type="PDB" id="5Z3G">
    <property type="method" value="EM"/>
    <property type="resolution" value="3.65 A"/>
    <property type="chains" value="I=1-176"/>
</dbReference>
<dbReference type="PDB" id="6C0F">
    <property type="method" value="EM"/>
    <property type="resolution" value="3.70 A"/>
    <property type="chains" value="E=1-176"/>
</dbReference>
<dbReference type="PDB" id="6CB1">
    <property type="method" value="EM"/>
    <property type="resolution" value="4.60 A"/>
    <property type="chains" value="E=1-176"/>
</dbReference>
<dbReference type="PDB" id="6ELZ">
    <property type="method" value="EM"/>
    <property type="resolution" value="3.30 A"/>
    <property type="chains" value="E=1-176"/>
</dbReference>
<dbReference type="PDB" id="6EM1">
    <property type="method" value="EM"/>
    <property type="resolution" value="3.60 A"/>
    <property type="chains" value="E=1-176"/>
</dbReference>
<dbReference type="PDB" id="6EM3">
    <property type="method" value="EM"/>
    <property type="resolution" value="3.20 A"/>
    <property type="chains" value="E=1-176"/>
</dbReference>
<dbReference type="PDB" id="6EM4">
    <property type="method" value="EM"/>
    <property type="resolution" value="4.10 A"/>
    <property type="chains" value="E=1-176"/>
</dbReference>
<dbReference type="PDB" id="6EM5">
    <property type="method" value="EM"/>
    <property type="resolution" value="4.30 A"/>
    <property type="chains" value="E=1-176"/>
</dbReference>
<dbReference type="PDB" id="6FT6">
    <property type="method" value="EM"/>
    <property type="resolution" value="3.90 A"/>
    <property type="chains" value="E=1-176"/>
</dbReference>
<dbReference type="PDB" id="6GQ1">
    <property type="method" value="EM"/>
    <property type="resolution" value="4.40 A"/>
    <property type="chains" value="E=2-176"/>
</dbReference>
<dbReference type="PDB" id="6GQB">
    <property type="method" value="EM"/>
    <property type="resolution" value="3.90 A"/>
    <property type="chains" value="E=2-176"/>
</dbReference>
<dbReference type="PDB" id="6GQV">
    <property type="method" value="EM"/>
    <property type="resolution" value="4.00 A"/>
    <property type="chains" value="E=2-176"/>
</dbReference>
<dbReference type="PDB" id="6HD7">
    <property type="method" value="EM"/>
    <property type="resolution" value="3.40 A"/>
    <property type="chains" value="I=1-176"/>
</dbReference>
<dbReference type="PDB" id="6HHQ">
    <property type="method" value="X-ray"/>
    <property type="resolution" value="3.10 A"/>
    <property type="chains" value="CH/n=1-176"/>
</dbReference>
<dbReference type="PDB" id="6I7O">
    <property type="method" value="EM"/>
    <property type="resolution" value="5.30 A"/>
    <property type="chains" value="BM/YM=1-176"/>
</dbReference>
<dbReference type="PDB" id="6M62">
    <property type="method" value="EM"/>
    <property type="resolution" value="3.20 A"/>
    <property type="chains" value="E=1-176"/>
</dbReference>
<dbReference type="PDB" id="6N8J">
    <property type="method" value="EM"/>
    <property type="resolution" value="3.50 A"/>
    <property type="chains" value="E=1-176"/>
</dbReference>
<dbReference type="PDB" id="6N8K">
    <property type="method" value="EM"/>
    <property type="resolution" value="3.60 A"/>
    <property type="chains" value="E=1-176"/>
</dbReference>
<dbReference type="PDB" id="6N8L">
    <property type="method" value="EM"/>
    <property type="resolution" value="3.60 A"/>
    <property type="chains" value="E=1-176"/>
</dbReference>
<dbReference type="PDB" id="6N8M">
    <property type="method" value="EM"/>
    <property type="resolution" value="3.50 A"/>
    <property type="chains" value="H=1-176"/>
</dbReference>
<dbReference type="PDB" id="6N8N">
    <property type="method" value="EM"/>
    <property type="resolution" value="3.80 A"/>
    <property type="chains" value="H=1-176"/>
</dbReference>
<dbReference type="PDB" id="6N8O">
    <property type="method" value="EM"/>
    <property type="resolution" value="3.50 A"/>
    <property type="chains" value="H=1-176"/>
</dbReference>
<dbReference type="PDB" id="6OIG">
    <property type="method" value="EM"/>
    <property type="resolution" value="3.80 A"/>
    <property type="chains" value="E=2-176"/>
</dbReference>
<dbReference type="PDB" id="6Q8Y">
    <property type="method" value="EM"/>
    <property type="resolution" value="3.10 A"/>
    <property type="chains" value="BM=2-176"/>
</dbReference>
<dbReference type="PDB" id="6QIK">
    <property type="method" value="EM"/>
    <property type="resolution" value="3.10 A"/>
    <property type="chains" value="G=1-176"/>
</dbReference>
<dbReference type="PDB" id="6QT0">
    <property type="method" value="EM"/>
    <property type="resolution" value="3.40 A"/>
    <property type="chains" value="G=1-176"/>
</dbReference>
<dbReference type="PDB" id="6QTZ">
    <property type="method" value="EM"/>
    <property type="resolution" value="3.50 A"/>
    <property type="chains" value="G=1-176"/>
</dbReference>
<dbReference type="PDB" id="6R84">
    <property type="method" value="EM"/>
    <property type="resolution" value="3.60 A"/>
    <property type="chains" value="I=2-176"/>
</dbReference>
<dbReference type="PDB" id="6R86">
    <property type="method" value="EM"/>
    <property type="resolution" value="3.40 A"/>
    <property type="chains" value="I=2-176"/>
</dbReference>
<dbReference type="PDB" id="6R87">
    <property type="method" value="EM"/>
    <property type="resolution" value="3.40 A"/>
    <property type="chains" value="I=2-176"/>
</dbReference>
<dbReference type="PDB" id="6RI5">
    <property type="method" value="EM"/>
    <property type="resolution" value="3.30 A"/>
    <property type="chains" value="G=1-176"/>
</dbReference>
<dbReference type="PDB" id="6RZZ">
    <property type="method" value="EM"/>
    <property type="resolution" value="3.20 A"/>
    <property type="chains" value="G=1-176"/>
</dbReference>
<dbReference type="PDB" id="6S05">
    <property type="method" value="EM"/>
    <property type="resolution" value="3.90 A"/>
    <property type="chains" value="G=1-176"/>
</dbReference>
<dbReference type="PDB" id="6S47">
    <property type="method" value="EM"/>
    <property type="resolution" value="3.28 A"/>
    <property type="chains" value="AH=2-176"/>
</dbReference>
<dbReference type="PDB" id="6SV4">
    <property type="method" value="EM"/>
    <property type="resolution" value="3.30 A"/>
    <property type="chains" value="BM/YM/ZM=1-176"/>
</dbReference>
<dbReference type="PDB" id="6T83">
    <property type="method" value="EM"/>
    <property type="resolution" value="4.00 A"/>
    <property type="chains" value="Ey/Ha=1-176"/>
</dbReference>
<dbReference type="PDB" id="6WOO">
    <property type="method" value="EM"/>
    <property type="resolution" value="2.90 A"/>
    <property type="chains" value="E=2-176"/>
</dbReference>
<dbReference type="PDB" id="6XIQ">
    <property type="method" value="EM"/>
    <property type="resolution" value="4.20 A"/>
    <property type="chains" value="E=1-176"/>
</dbReference>
<dbReference type="PDB" id="6XIR">
    <property type="method" value="EM"/>
    <property type="resolution" value="3.20 A"/>
    <property type="chains" value="E=1-176"/>
</dbReference>
<dbReference type="PDB" id="6YLG">
    <property type="method" value="EM"/>
    <property type="resolution" value="3.00 A"/>
    <property type="chains" value="E=1-176"/>
</dbReference>
<dbReference type="PDB" id="6YLH">
    <property type="method" value="EM"/>
    <property type="resolution" value="3.10 A"/>
    <property type="chains" value="E=1-176"/>
</dbReference>
<dbReference type="PDB" id="6YLX">
    <property type="method" value="EM"/>
    <property type="resolution" value="3.90 A"/>
    <property type="chains" value="E=1-176"/>
</dbReference>
<dbReference type="PDB" id="6YLY">
    <property type="method" value="EM"/>
    <property type="resolution" value="3.80 A"/>
    <property type="chains" value="E=1-176"/>
</dbReference>
<dbReference type="PDB" id="6Z6J">
    <property type="method" value="EM"/>
    <property type="resolution" value="3.40 A"/>
    <property type="chains" value="LE=1-176"/>
</dbReference>
<dbReference type="PDB" id="6Z6K">
    <property type="method" value="EM"/>
    <property type="resolution" value="3.40 A"/>
    <property type="chains" value="LE=1-176"/>
</dbReference>
<dbReference type="PDB" id="7AZY">
    <property type="method" value="EM"/>
    <property type="resolution" value="2.88 A"/>
    <property type="chains" value="A=1-176"/>
</dbReference>
<dbReference type="PDB" id="7BT6">
    <property type="method" value="EM"/>
    <property type="resolution" value="3.12 A"/>
    <property type="chains" value="E=1-176"/>
</dbReference>
<dbReference type="PDB" id="7BTB">
    <property type="method" value="EM"/>
    <property type="resolution" value="3.22 A"/>
    <property type="chains" value="E=1-176"/>
</dbReference>
<dbReference type="PDB" id="7MPI">
    <property type="method" value="EM"/>
    <property type="resolution" value="3.05 A"/>
    <property type="chains" value="AE=2-176"/>
</dbReference>
<dbReference type="PDB" id="7N8B">
    <property type="method" value="EM"/>
    <property type="resolution" value="3.05 A"/>
    <property type="chains" value="AE=2-176"/>
</dbReference>
<dbReference type="PDB" id="7NAC">
    <property type="method" value="EM"/>
    <property type="resolution" value="3.04 A"/>
    <property type="chains" value="E=1-176"/>
</dbReference>
<dbReference type="PDB" id="7OF1">
    <property type="method" value="EM"/>
    <property type="resolution" value="3.10 A"/>
    <property type="chains" value="E=1-176"/>
</dbReference>
<dbReference type="PDB" id="7OH3">
    <property type="method" value="EM"/>
    <property type="resolution" value="3.40 A"/>
    <property type="chains" value="E=1-176"/>
</dbReference>
<dbReference type="PDB" id="7OHP">
    <property type="method" value="EM"/>
    <property type="resolution" value="3.90 A"/>
    <property type="chains" value="E=1-176"/>
</dbReference>
<dbReference type="PDB" id="7OHQ">
    <property type="method" value="EM"/>
    <property type="resolution" value="3.10 A"/>
    <property type="chains" value="E=1-176"/>
</dbReference>
<dbReference type="PDB" id="7OHR">
    <property type="method" value="EM"/>
    <property type="resolution" value="4.72 A"/>
    <property type="chains" value="E=1-176"/>
</dbReference>
<dbReference type="PDB" id="7OHS">
    <property type="method" value="EM"/>
    <property type="resolution" value="4.38 A"/>
    <property type="chains" value="E=1-176"/>
</dbReference>
<dbReference type="PDB" id="7OHT">
    <property type="method" value="EM"/>
    <property type="resolution" value="4.70 A"/>
    <property type="chains" value="E=1-176"/>
</dbReference>
<dbReference type="PDB" id="7OHU">
    <property type="method" value="EM"/>
    <property type="resolution" value="3.70 A"/>
    <property type="chains" value="E=1-176"/>
</dbReference>
<dbReference type="PDB" id="7OHV">
    <property type="method" value="EM"/>
    <property type="resolution" value="3.90 A"/>
    <property type="chains" value="E=1-176"/>
</dbReference>
<dbReference type="PDB" id="7OHW">
    <property type="method" value="EM"/>
    <property type="resolution" value="3.50 A"/>
    <property type="chains" value="E=1-176"/>
</dbReference>
<dbReference type="PDB" id="7OHX">
    <property type="method" value="EM"/>
    <property type="resolution" value="3.30 A"/>
    <property type="chains" value="E=1-176"/>
</dbReference>
<dbReference type="PDB" id="7OHY">
    <property type="method" value="EM"/>
    <property type="resolution" value="3.90 A"/>
    <property type="chains" value="E=1-176"/>
</dbReference>
<dbReference type="PDB" id="7R7A">
    <property type="method" value="EM"/>
    <property type="resolution" value="3.04 A"/>
    <property type="chains" value="E=1-176"/>
</dbReference>
<dbReference type="PDB" id="7TOO">
    <property type="method" value="EM"/>
    <property type="resolution" value="2.70 A"/>
    <property type="chains" value="AL06=1-176"/>
</dbReference>
<dbReference type="PDB" id="7TOP">
    <property type="method" value="EM"/>
    <property type="resolution" value="2.40 A"/>
    <property type="chains" value="AL06=1-176"/>
</dbReference>
<dbReference type="PDB" id="7U0H">
    <property type="method" value="EM"/>
    <property type="resolution" value="2.76 A"/>
    <property type="chains" value="E=1-176"/>
</dbReference>
<dbReference type="PDB" id="7UG6">
    <property type="method" value="EM"/>
    <property type="resolution" value="2.90 A"/>
    <property type="chains" value="E=1-176"/>
</dbReference>
<dbReference type="PDB" id="7UOO">
    <property type="method" value="EM"/>
    <property type="resolution" value="2.34 A"/>
    <property type="chains" value="E=1-176"/>
</dbReference>
<dbReference type="PDB" id="7UQB">
    <property type="method" value="EM"/>
    <property type="resolution" value="2.43 A"/>
    <property type="chains" value="E=1-176"/>
</dbReference>
<dbReference type="PDB" id="7UQZ">
    <property type="method" value="EM"/>
    <property type="resolution" value="2.44 A"/>
    <property type="chains" value="E=1-176"/>
</dbReference>
<dbReference type="PDB" id="7V08">
    <property type="method" value="EM"/>
    <property type="resolution" value="2.36 A"/>
    <property type="chains" value="E=1-176"/>
</dbReference>
<dbReference type="PDB" id="7Z34">
    <property type="method" value="EM"/>
    <property type="resolution" value="3.80 A"/>
    <property type="chains" value="E=1-176"/>
</dbReference>
<dbReference type="PDB" id="7ZS5">
    <property type="method" value="EM"/>
    <property type="resolution" value="3.20 A"/>
    <property type="chains" value="BG=1-176"/>
</dbReference>
<dbReference type="PDB" id="8BN3">
    <property type="method" value="EM"/>
    <property type="resolution" value="2.40 A"/>
    <property type="chains" value="L6=2-176"/>
</dbReference>
<dbReference type="PDB" id="8CCS">
    <property type="method" value="EM"/>
    <property type="resolution" value="1.97 A"/>
    <property type="chains" value="II=1-176"/>
</dbReference>
<dbReference type="PDB" id="8CDL">
    <property type="method" value="EM"/>
    <property type="resolution" value="2.72 A"/>
    <property type="chains" value="II=1-176"/>
</dbReference>
<dbReference type="PDB" id="8CDR">
    <property type="method" value="EM"/>
    <property type="resolution" value="2.04 A"/>
    <property type="chains" value="II=1-176"/>
</dbReference>
<dbReference type="PDB" id="8CEH">
    <property type="method" value="EM"/>
    <property type="resolution" value="2.05 A"/>
    <property type="chains" value="II=1-176"/>
</dbReference>
<dbReference type="PDB" id="8CF5">
    <property type="method" value="EM"/>
    <property type="resolution" value="2.71 A"/>
    <property type="chains" value="II=1-176"/>
</dbReference>
<dbReference type="PDB" id="8CG8">
    <property type="method" value="EM"/>
    <property type="resolution" value="2.57 A"/>
    <property type="chains" value="II=1-176"/>
</dbReference>
<dbReference type="PDB" id="8CGN">
    <property type="method" value="EM"/>
    <property type="resolution" value="2.28 A"/>
    <property type="chains" value="II=1-176"/>
</dbReference>
<dbReference type="PDB" id="8CIV">
    <property type="method" value="EM"/>
    <property type="resolution" value="2.47 A"/>
    <property type="chains" value="II=1-176"/>
</dbReference>
<dbReference type="PDB" id="8CKU">
    <property type="method" value="EM"/>
    <property type="resolution" value="3.11 A"/>
    <property type="chains" value="II=1-176"/>
</dbReference>
<dbReference type="PDB" id="8CMJ">
    <property type="method" value="EM"/>
    <property type="resolution" value="3.79 A"/>
    <property type="chains" value="II=1-176"/>
</dbReference>
<dbReference type="PDB" id="8E5T">
    <property type="method" value="EM"/>
    <property type="resolution" value="4.00 A"/>
    <property type="chains" value="E=1-176"/>
</dbReference>
<dbReference type="PDB" id="8EUB">
    <property type="method" value="EM"/>
    <property type="resolution" value="2.52 A"/>
    <property type="chains" value="AE=1-176"/>
</dbReference>
<dbReference type="PDB" id="8EVP">
    <property type="method" value="EM"/>
    <property type="resolution" value="2.38 A"/>
    <property type="chains" value="AE=1-176"/>
</dbReference>
<dbReference type="PDB" id="8EVQ">
    <property type="method" value="EM"/>
    <property type="resolution" value="2.72 A"/>
    <property type="chains" value="AE=1-176"/>
</dbReference>
<dbReference type="PDB" id="8EVR">
    <property type="method" value="EM"/>
    <property type="resolution" value="2.87 A"/>
    <property type="chains" value="AE=1-176"/>
</dbReference>
<dbReference type="PDB" id="8EVS">
    <property type="method" value="EM"/>
    <property type="resolution" value="2.62 A"/>
    <property type="chains" value="AE=1-176"/>
</dbReference>
<dbReference type="PDB" id="8EVT">
    <property type="method" value="EM"/>
    <property type="resolution" value="2.20 A"/>
    <property type="chains" value="AE=1-176"/>
</dbReference>
<dbReference type="PDB" id="8EWB">
    <property type="method" value="EM"/>
    <property type="resolution" value="2.87 A"/>
    <property type="chains" value="AE=1-176"/>
</dbReference>
<dbReference type="PDB" id="8EWC">
    <property type="method" value="EM"/>
    <property type="resolution" value="2.45 A"/>
    <property type="chains" value="AE=1-176"/>
</dbReference>
<dbReference type="PDB" id="8HFR">
    <property type="method" value="EM"/>
    <property type="resolution" value="2.64 A"/>
    <property type="chains" value="F8=1-176"/>
</dbReference>
<dbReference type="PDB" id="8K2D">
    <property type="method" value="EM"/>
    <property type="resolution" value="3.20 A"/>
    <property type="chains" value="LE=1-176"/>
</dbReference>
<dbReference type="PDB" id="8K82">
    <property type="method" value="EM"/>
    <property type="resolution" value="3.00 A"/>
    <property type="chains" value="LE=1-176"/>
</dbReference>
<dbReference type="PDB" id="8P4V">
    <property type="method" value="X-ray"/>
    <property type="resolution" value="3.16 A"/>
    <property type="chains" value="CH/n=1-176"/>
</dbReference>
<dbReference type="PDB" id="8P8M">
    <property type="method" value="EM"/>
    <property type="resolution" value="2.66 A"/>
    <property type="chains" value="LJ=1-176"/>
</dbReference>
<dbReference type="PDB" id="8P8N">
    <property type="method" value="EM"/>
    <property type="resolution" value="2.15 A"/>
    <property type="chains" value="LJ=1-176"/>
</dbReference>
<dbReference type="PDB" id="8P8U">
    <property type="method" value="EM"/>
    <property type="resolution" value="2.23 A"/>
    <property type="chains" value="LJ=1-176"/>
</dbReference>
<dbReference type="PDB" id="8P9A">
    <property type="method" value="X-ray"/>
    <property type="resolution" value="2.90 A"/>
    <property type="chains" value="CH/n=1-176"/>
</dbReference>
<dbReference type="PDB" id="8PFR">
    <property type="method" value="EM"/>
    <property type="resolution" value="2.15 A"/>
    <property type="chains" value="LJ=1-176"/>
</dbReference>
<dbReference type="PDB" id="8T2X">
    <property type="method" value="EM"/>
    <property type="resolution" value="2.46 A"/>
    <property type="chains" value="AE=1-176"/>
</dbReference>
<dbReference type="PDB" id="8T2Y">
    <property type="method" value="EM"/>
    <property type="resolution" value="2.20 A"/>
    <property type="chains" value="AE=1-176"/>
</dbReference>
<dbReference type="PDB" id="8T2Z">
    <property type="method" value="EM"/>
    <property type="resolution" value="2.40 A"/>
    <property type="chains" value="AE=1-176"/>
</dbReference>
<dbReference type="PDB" id="8T30">
    <property type="method" value="EM"/>
    <property type="resolution" value="2.88 A"/>
    <property type="chains" value="AE=1-176"/>
</dbReference>
<dbReference type="PDB" id="8T3A">
    <property type="method" value="EM"/>
    <property type="resolution" value="2.86 A"/>
    <property type="chains" value="AE=1-176"/>
</dbReference>
<dbReference type="PDB" id="8T3B">
    <property type="method" value="EM"/>
    <property type="resolution" value="3.08 A"/>
    <property type="chains" value="AE=1-176"/>
</dbReference>
<dbReference type="PDB" id="8T3C">
    <property type="method" value="EM"/>
    <property type="resolution" value="3.86 A"/>
    <property type="chains" value="AE=1-176"/>
</dbReference>
<dbReference type="PDB" id="8T3D">
    <property type="method" value="EM"/>
    <property type="resolution" value="2.95 A"/>
    <property type="chains" value="AE=1-176"/>
</dbReference>
<dbReference type="PDB" id="8T3E">
    <property type="method" value="EM"/>
    <property type="resolution" value="3.04 A"/>
    <property type="chains" value="AE=1-176"/>
</dbReference>
<dbReference type="PDB" id="8T3F">
    <property type="method" value="EM"/>
    <property type="resolution" value="3.09 A"/>
    <property type="chains" value="AE=1-176"/>
</dbReference>
<dbReference type="PDB" id="8UT0">
    <property type="method" value="EM"/>
    <property type="resolution" value="3.22 A"/>
    <property type="chains" value="LH=2-176"/>
</dbReference>
<dbReference type="PDB" id="8UTI">
    <property type="method" value="EM"/>
    <property type="resolution" value="3.13 A"/>
    <property type="chains" value="LH=2-176"/>
</dbReference>
<dbReference type="PDB" id="8V83">
    <property type="method" value="EM"/>
    <property type="resolution" value="2.53 A"/>
    <property type="chains" value="E=1-176"/>
</dbReference>
<dbReference type="PDB" id="8V84">
    <property type="method" value="EM"/>
    <property type="resolution" value="2.70 A"/>
    <property type="chains" value="E=1-176"/>
</dbReference>
<dbReference type="PDB" id="8V87">
    <property type="method" value="EM"/>
    <property type="resolution" value="2.66 A"/>
    <property type="chains" value="E=1-176"/>
</dbReference>
<dbReference type="PDB" id="9F9S">
    <property type="method" value="EM"/>
    <property type="resolution" value="2.90 A"/>
    <property type="chains" value="MA=1-176"/>
</dbReference>
<dbReference type="PDBsum" id="3J6X"/>
<dbReference type="PDBsum" id="3J6Y"/>
<dbReference type="PDBsum" id="3J77"/>
<dbReference type="PDBsum" id="3J78"/>
<dbReference type="PDBsum" id="3JBS"/>
<dbReference type="PDBsum" id="3JCT"/>
<dbReference type="PDBsum" id="4U3M"/>
<dbReference type="PDBsum" id="4U3N"/>
<dbReference type="PDBsum" id="4U3U"/>
<dbReference type="PDBsum" id="4U4N"/>
<dbReference type="PDBsum" id="4U4O"/>
<dbReference type="PDBsum" id="4U4Q"/>
<dbReference type="PDBsum" id="4U4R"/>
<dbReference type="PDBsum" id="4U4U"/>
<dbReference type="PDBsum" id="4U4Y"/>
<dbReference type="PDBsum" id="4U4Z"/>
<dbReference type="PDBsum" id="4U50"/>
<dbReference type="PDBsum" id="4U51"/>
<dbReference type="PDBsum" id="4U52"/>
<dbReference type="PDBsum" id="4U53"/>
<dbReference type="PDBsum" id="4U55"/>
<dbReference type="PDBsum" id="4U56"/>
<dbReference type="PDBsum" id="4U6F"/>
<dbReference type="PDBsum" id="4V6I"/>
<dbReference type="PDBsum" id="4V7F"/>
<dbReference type="PDBsum" id="4V7R"/>
<dbReference type="PDBsum" id="4V88"/>
<dbReference type="PDBsum" id="4V8T"/>
<dbReference type="PDBsum" id="4V8Y"/>
<dbReference type="PDBsum" id="4V8Z"/>
<dbReference type="PDBsum" id="4V91"/>
<dbReference type="PDBsum" id="5APN"/>
<dbReference type="PDBsum" id="5DAT"/>
<dbReference type="PDBsum" id="5DC3"/>
<dbReference type="PDBsum" id="5DGE"/>
<dbReference type="PDBsum" id="5DGF"/>
<dbReference type="PDBsum" id="5DGV"/>
<dbReference type="PDBsum" id="5FCI"/>
<dbReference type="PDBsum" id="5FCJ"/>
<dbReference type="PDBsum" id="5GAK"/>
<dbReference type="PDBsum" id="5H4P"/>
<dbReference type="PDBsum" id="5I4L"/>
<dbReference type="PDBsum" id="5JCS"/>
<dbReference type="PDBsum" id="5JUO"/>
<dbReference type="PDBsum" id="5JUP"/>
<dbReference type="PDBsum" id="5JUS"/>
<dbReference type="PDBsum" id="5JUT"/>
<dbReference type="PDBsum" id="5JUU"/>
<dbReference type="PDBsum" id="5LYB"/>
<dbReference type="PDBsum" id="5M1J"/>
<dbReference type="PDBsum" id="5MC6"/>
<dbReference type="PDBsum" id="5MEI"/>
<dbReference type="PDBsum" id="5NDG"/>
<dbReference type="PDBsum" id="5NDV"/>
<dbReference type="PDBsum" id="5NDW"/>
<dbReference type="PDBsum" id="5OBM"/>
<dbReference type="PDBsum" id="5ON6"/>
<dbReference type="PDBsum" id="5T62"/>
<dbReference type="PDBsum" id="5T6R"/>
<dbReference type="PDBsum" id="5TBW"/>
<dbReference type="PDBsum" id="5TGA"/>
<dbReference type="PDBsum" id="5TGM"/>
<dbReference type="PDBsum" id="5Z3G"/>
<dbReference type="PDBsum" id="6C0F"/>
<dbReference type="PDBsum" id="6CB1"/>
<dbReference type="PDBsum" id="6ELZ"/>
<dbReference type="PDBsum" id="6EM1"/>
<dbReference type="PDBsum" id="6EM3"/>
<dbReference type="PDBsum" id="6EM4"/>
<dbReference type="PDBsum" id="6EM5"/>
<dbReference type="PDBsum" id="6FT6"/>
<dbReference type="PDBsum" id="6GQ1"/>
<dbReference type="PDBsum" id="6GQB"/>
<dbReference type="PDBsum" id="6GQV"/>
<dbReference type="PDBsum" id="6HD7"/>
<dbReference type="PDBsum" id="6HHQ"/>
<dbReference type="PDBsum" id="6I7O"/>
<dbReference type="PDBsum" id="6M62"/>
<dbReference type="PDBsum" id="6N8J"/>
<dbReference type="PDBsum" id="6N8K"/>
<dbReference type="PDBsum" id="6N8L"/>
<dbReference type="PDBsum" id="6N8M"/>
<dbReference type="PDBsum" id="6N8N"/>
<dbReference type="PDBsum" id="6N8O"/>
<dbReference type="PDBsum" id="6OIG"/>
<dbReference type="PDBsum" id="6Q8Y"/>
<dbReference type="PDBsum" id="6QIK"/>
<dbReference type="PDBsum" id="6QT0"/>
<dbReference type="PDBsum" id="6QTZ"/>
<dbReference type="PDBsum" id="6R84"/>
<dbReference type="PDBsum" id="6R86"/>
<dbReference type="PDBsum" id="6R87"/>
<dbReference type="PDBsum" id="6RI5"/>
<dbReference type="PDBsum" id="6RZZ"/>
<dbReference type="PDBsum" id="6S05"/>
<dbReference type="PDBsum" id="6S47"/>
<dbReference type="PDBsum" id="6SV4"/>
<dbReference type="PDBsum" id="6T83"/>
<dbReference type="PDBsum" id="6WOO"/>
<dbReference type="PDBsum" id="6XIQ"/>
<dbReference type="PDBsum" id="6XIR"/>
<dbReference type="PDBsum" id="6YLG"/>
<dbReference type="PDBsum" id="6YLH"/>
<dbReference type="PDBsum" id="6YLX"/>
<dbReference type="PDBsum" id="6YLY"/>
<dbReference type="PDBsum" id="6Z6J"/>
<dbReference type="PDBsum" id="6Z6K"/>
<dbReference type="PDBsum" id="7AZY"/>
<dbReference type="PDBsum" id="7BT6"/>
<dbReference type="PDBsum" id="7BTB"/>
<dbReference type="PDBsum" id="7MPI"/>
<dbReference type="PDBsum" id="7N8B"/>
<dbReference type="PDBsum" id="7NAC"/>
<dbReference type="PDBsum" id="7OF1"/>
<dbReference type="PDBsum" id="7OH3"/>
<dbReference type="PDBsum" id="7OHP"/>
<dbReference type="PDBsum" id="7OHQ"/>
<dbReference type="PDBsum" id="7OHR"/>
<dbReference type="PDBsum" id="7OHS"/>
<dbReference type="PDBsum" id="7OHT"/>
<dbReference type="PDBsum" id="7OHU"/>
<dbReference type="PDBsum" id="7OHV"/>
<dbReference type="PDBsum" id="7OHW"/>
<dbReference type="PDBsum" id="7OHX"/>
<dbReference type="PDBsum" id="7OHY"/>
<dbReference type="PDBsum" id="7R7A"/>
<dbReference type="PDBsum" id="7TOO"/>
<dbReference type="PDBsum" id="7TOP"/>
<dbReference type="PDBsum" id="7U0H"/>
<dbReference type="PDBsum" id="7UG6"/>
<dbReference type="PDBsum" id="7UOO"/>
<dbReference type="PDBsum" id="7UQB"/>
<dbReference type="PDBsum" id="7UQZ"/>
<dbReference type="PDBsum" id="7V08"/>
<dbReference type="PDBsum" id="7Z34"/>
<dbReference type="PDBsum" id="7ZS5"/>
<dbReference type="PDBsum" id="8BN3"/>
<dbReference type="PDBsum" id="8CCS"/>
<dbReference type="PDBsum" id="8CDL"/>
<dbReference type="PDBsum" id="8CDR"/>
<dbReference type="PDBsum" id="8CEH"/>
<dbReference type="PDBsum" id="8CF5"/>
<dbReference type="PDBsum" id="8CG8"/>
<dbReference type="PDBsum" id="8CGN"/>
<dbReference type="PDBsum" id="8CIV"/>
<dbReference type="PDBsum" id="8CKU"/>
<dbReference type="PDBsum" id="8CMJ"/>
<dbReference type="PDBsum" id="8E5T"/>
<dbReference type="PDBsum" id="8EUB"/>
<dbReference type="PDBsum" id="8EVP"/>
<dbReference type="PDBsum" id="8EVQ"/>
<dbReference type="PDBsum" id="8EVR"/>
<dbReference type="PDBsum" id="8EVS"/>
<dbReference type="PDBsum" id="8EVT"/>
<dbReference type="PDBsum" id="8EWB"/>
<dbReference type="PDBsum" id="8EWC"/>
<dbReference type="PDBsum" id="8HFR"/>
<dbReference type="PDBsum" id="8K2D"/>
<dbReference type="PDBsum" id="8K82"/>
<dbReference type="PDBsum" id="8P4V"/>
<dbReference type="PDBsum" id="8P8M"/>
<dbReference type="PDBsum" id="8P8N"/>
<dbReference type="PDBsum" id="8P8U"/>
<dbReference type="PDBsum" id="8P9A"/>
<dbReference type="PDBsum" id="8PFR"/>
<dbReference type="PDBsum" id="8T2X"/>
<dbReference type="PDBsum" id="8T2Y"/>
<dbReference type="PDBsum" id="8T2Z"/>
<dbReference type="PDBsum" id="8T30"/>
<dbReference type="PDBsum" id="8T3A"/>
<dbReference type="PDBsum" id="8T3B"/>
<dbReference type="PDBsum" id="8T3C"/>
<dbReference type="PDBsum" id="8T3D"/>
<dbReference type="PDBsum" id="8T3E"/>
<dbReference type="PDBsum" id="8T3F"/>
<dbReference type="PDBsum" id="8UT0"/>
<dbReference type="PDBsum" id="8UTI"/>
<dbReference type="PDBsum" id="8V83"/>
<dbReference type="PDBsum" id="8V84"/>
<dbReference type="PDBsum" id="8V87"/>
<dbReference type="PDBsum" id="9F9S"/>
<dbReference type="EMDB" id="EMD-0369"/>
<dbReference type="EMDB" id="EMD-0370"/>
<dbReference type="EMDB" id="EMD-0371"/>
<dbReference type="EMDB" id="EMD-0372"/>
<dbReference type="EMDB" id="EMD-0373"/>
<dbReference type="EMDB" id="EMD-10068"/>
<dbReference type="EMDB" id="EMD-10071"/>
<dbReference type="EMDB" id="EMD-10315"/>
<dbReference type="EMDB" id="EMD-10398"/>
<dbReference type="EMDB" id="EMD-10841"/>
<dbReference type="EMDB" id="EMD-10842"/>
<dbReference type="EMDB" id="EMD-11096"/>
<dbReference type="EMDB" id="EMD-11097"/>
<dbReference type="EMDB" id="EMD-11951"/>
<dbReference type="EMDB" id="EMD-12866"/>
<dbReference type="EMDB" id="EMD-12892"/>
<dbReference type="EMDB" id="EMD-12904"/>
<dbReference type="EMDB" id="EMD-12905"/>
<dbReference type="EMDB" id="EMD-12906"/>
<dbReference type="EMDB" id="EMD-12907"/>
<dbReference type="EMDB" id="EMD-12908"/>
<dbReference type="EMDB" id="EMD-12909"/>
<dbReference type="EMDB" id="EMD-12910"/>
<dbReference type="EMDB" id="EMD-12911"/>
<dbReference type="EMDB" id="EMD-12912"/>
<dbReference type="EMDB" id="EMD-12913"/>
<dbReference type="EMDB" id="EMD-14471"/>
<dbReference type="EMDB" id="EMD-14926"/>
<dbReference type="EMDB" id="EMD-16563"/>
<dbReference type="EMDB" id="EMD-16591"/>
<dbReference type="EMDB" id="EMD-16594"/>
<dbReference type="EMDB" id="EMD-16609"/>
<dbReference type="EMDB" id="EMD-16616"/>
<dbReference type="EMDB" id="EMD-16634"/>
<dbReference type="EMDB" id="EMD-16648"/>
<dbReference type="EMDB" id="EMD-16684"/>
<dbReference type="EMDB" id="EMD-16702"/>
<dbReference type="EMDB" id="EMD-16729"/>
<dbReference type="EMDB" id="EMD-17549"/>
<dbReference type="EMDB" id="EMD-17550"/>
<dbReference type="EMDB" id="EMD-17552"/>
<dbReference type="EMDB" id="EMD-17653"/>
<dbReference type="EMDB" id="EMD-20077"/>
<dbReference type="EMDB" id="EMD-21859"/>
<dbReference type="EMDB" id="EMD-22196"/>
<dbReference type="EMDB" id="EMD-22198"/>
<dbReference type="EMDB" id="EMD-23934"/>
<dbReference type="EMDB" id="EMD-24235"/>
<dbReference type="EMDB" id="EMD-24269"/>
<dbReference type="EMDB" id="EMD-24296"/>
<dbReference type="EMDB" id="EMD-26033"/>
<dbReference type="EMDB" id="EMD-26034"/>
<dbReference type="EMDB" id="EMD-26259"/>
<dbReference type="EMDB" id="EMD-26485"/>
<dbReference type="EMDB" id="EMD-26651"/>
<dbReference type="EMDB" id="EMD-26686"/>
<dbReference type="EMDB" id="EMD-26703"/>
<dbReference type="EMDB" id="EMD-26941"/>
<dbReference type="EMDB" id="EMD-27919"/>
<dbReference type="EMDB" id="EMD-28610"/>
<dbReference type="EMDB" id="EMD-28632"/>
<dbReference type="EMDB" id="EMD-28633"/>
<dbReference type="EMDB" id="EMD-28634"/>
<dbReference type="EMDB" id="EMD-28635"/>
<dbReference type="EMDB" id="EMD-28636"/>
<dbReference type="EMDB" id="EMD-28642"/>
<dbReference type="EMDB" id="EMD-28643"/>
<dbReference type="EMDB" id="EMD-30108"/>
<dbReference type="EMDB" id="EMD-30170"/>
<dbReference type="EMDB" id="EMD-30174"/>
<dbReference type="EMDB" id="EMD-34725"/>
<dbReference type="EMDB" id="EMD-36839"/>
<dbReference type="EMDB" id="EMD-36945"/>
<dbReference type="EMDB" id="EMD-40990"/>
<dbReference type="EMDB" id="EMD-40991"/>
<dbReference type="EMDB" id="EMD-40992"/>
<dbReference type="EMDB" id="EMD-40993"/>
<dbReference type="EMDB" id="EMD-40997"/>
<dbReference type="EMDB" id="EMD-40998"/>
<dbReference type="EMDB" id="EMD-40999"/>
<dbReference type="EMDB" id="EMD-41000"/>
<dbReference type="EMDB" id="EMD-41001"/>
<dbReference type="EMDB" id="EMD-41002"/>
<dbReference type="EMDB" id="EMD-4140"/>
<dbReference type="EMDB" id="EMD-43017"/>
<dbReference type="EMDB" id="EMD-4302"/>
<dbReference type="EMDB" id="EMD-43021"/>
<dbReference type="EMDB" id="EMD-43027"/>
<dbReference type="EMDB" id="EMD-4427"/>
<dbReference type="EMDB" id="EMD-4474"/>
<dbReference type="EMDB" id="EMD-4560"/>
<dbReference type="EMDB" id="EMD-4630"/>
<dbReference type="EMDB" id="EMD-4636"/>
<dbReference type="EMDB" id="EMD-4751"/>
<dbReference type="EMDB" id="EMD-4752"/>
<dbReference type="EMDB" id="EMD-4753"/>
<dbReference type="EMDB" id="EMD-4884"/>
<dbReference type="EMDB" id="EMD-50259"/>
<dbReference type="EMDB" id="EMD-6878"/>
<dbReference type="EMDB" id="EMD-7324"/>
<dbReference type="EMDB" id="EMD-8362"/>
<dbReference type="EMDB" id="EMD-8368"/>
<dbReference type="SMR" id="Q02326"/>
<dbReference type="BioGRID" id="35068">
    <property type="interactions" value="309"/>
</dbReference>
<dbReference type="ComplexPortal" id="CPX-1601">
    <property type="entry name" value="60S cytosolic large ribosomal subunit"/>
</dbReference>
<dbReference type="FunCoup" id="Q02326">
    <property type="interactions" value="1373"/>
</dbReference>
<dbReference type="IntAct" id="Q02326">
    <property type="interactions" value="136"/>
</dbReference>
<dbReference type="MINT" id="Q02326"/>
<dbReference type="STRING" id="4932.YML073C"/>
<dbReference type="CarbonylDB" id="Q02326"/>
<dbReference type="iPTMnet" id="Q02326"/>
<dbReference type="PaxDb" id="4932-YML073C"/>
<dbReference type="PeptideAtlas" id="Q02326"/>
<dbReference type="EnsemblFungi" id="YML073C_mRNA">
    <property type="protein sequence ID" value="YML073C"/>
    <property type="gene ID" value="YML073C"/>
</dbReference>
<dbReference type="GeneID" id="854902"/>
<dbReference type="KEGG" id="sce:YML073C"/>
<dbReference type="AGR" id="SGD:S000004538"/>
<dbReference type="SGD" id="S000004538">
    <property type="gene designation" value="RPL6A"/>
</dbReference>
<dbReference type="VEuPathDB" id="FungiDB:YML073C"/>
<dbReference type="eggNOG" id="KOG1694">
    <property type="taxonomic scope" value="Eukaryota"/>
</dbReference>
<dbReference type="GeneTree" id="ENSGT00390000003682"/>
<dbReference type="HOGENOM" id="CLU_066767_2_1_1"/>
<dbReference type="InParanoid" id="Q02326"/>
<dbReference type="OMA" id="FPCHEKK"/>
<dbReference type="OrthoDB" id="2436667at2759"/>
<dbReference type="BioCyc" id="YEAST:G3O-32667-MONOMER"/>
<dbReference type="Reactome" id="R-SCE-156827">
    <property type="pathway name" value="L13a-mediated translational silencing of Ceruloplasmin expression"/>
</dbReference>
<dbReference type="Reactome" id="R-SCE-1799339">
    <property type="pathway name" value="SRP-dependent cotranslational protein targeting to membrane"/>
</dbReference>
<dbReference type="Reactome" id="R-SCE-72689">
    <property type="pathway name" value="Formation of a pool of free 40S subunits"/>
</dbReference>
<dbReference type="Reactome" id="R-SCE-72706">
    <property type="pathway name" value="GTP hydrolysis and joining of the 60S ribosomal subunit"/>
</dbReference>
<dbReference type="Reactome" id="R-SCE-975956">
    <property type="pathway name" value="Nonsense Mediated Decay (NMD) independent of the Exon Junction Complex (EJC)"/>
</dbReference>
<dbReference type="Reactome" id="R-SCE-975957">
    <property type="pathway name" value="Nonsense Mediated Decay (NMD) enhanced by the Exon Junction Complex (EJC)"/>
</dbReference>
<dbReference type="BioGRID-ORCS" id="854902">
    <property type="hits" value="5 hits in 10 CRISPR screens"/>
</dbReference>
<dbReference type="PRO" id="PR:Q02326"/>
<dbReference type="Proteomes" id="UP000002311">
    <property type="component" value="Chromosome XIII"/>
</dbReference>
<dbReference type="RNAct" id="Q02326">
    <property type="molecule type" value="protein"/>
</dbReference>
<dbReference type="GO" id="GO:0005829">
    <property type="term" value="C:cytosol"/>
    <property type="evidence" value="ECO:0000304"/>
    <property type="project" value="Reactome"/>
</dbReference>
<dbReference type="GO" id="GO:0022625">
    <property type="term" value="C:cytosolic large ribosomal subunit"/>
    <property type="evidence" value="ECO:0000314"/>
    <property type="project" value="SGD"/>
</dbReference>
<dbReference type="GO" id="GO:0003723">
    <property type="term" value="F:RNA binding"/>
    <property type="evidence" value="ECO:0000314"/>
    <property type="project" value="SGD"/>
</dbReference>
<dbReference type="GO" id="GO:0003735">
    <property type="term" value="F:structural constituent of ribosome"/>
    <property type="evidence" value="ECO:0000314"/>
    <property type="project" value="SGD"/>
</dbReference>
<dbReference type="GO" id="GO:0002181">
    <property type="term" value="P:cytoplasmic translation"/>
    <property type="evidence" value="ECO:0000314"/>
    <property type="project" value="SGD"/>
</dbReference>
<dbReference type="GO" id="GO:0000027">
    <property type="term" value="P:ribosomal large subunit assembly"/>
    <property type="evidence" value="ECO:0000315"/>
    <property type="project" value="SGD"/>
</dbReference>
<dbReference type="CDD" id="cd13156">
    <property type="entry name" value="KOW_RPL6"/>
    <property type="match status" value="1"/>
</dbReference>
<dbReference type="FunFam" id="2.30.30.30:FF:000014">
    <property type="entry name" value="60S ribosomal protein L6"/>
    <property type="match status" value="1"/>
</dbReference>
<dbReference type="Gene3D" id="2.30.30.30">
    <property type="match status" value="1"/>
</dbReference>
<dbReference type="InterPro" id="IPR000915">
    <property type="entry name" value="60S_ribosomal_eL6"/>
</dbReference>
<dbReference type="InterPro" id="IPR014722">
    <property type="entry name" value="Rib_uL2_dom2"/>
</dbReference>
<dbReference type="InterPro" id="IPR049633">
    <property type="entry name" value="Ribosomal_eL6_CS"/>
</dbReference>
<dbReference type="InterPro" id="IPR041997">
    <property type="entry name" value="Ribosomal_eL6_KOW"/>
</dbReference>
<dbReference type="InterPro" id="IPR008991">
    <property type="entry name" value="Translation_prot_SH3-like_sf"/>
</dbReference>
<dbReference type="PANTHER" id="PTHR10715">
    <property type="entry name" value="60S RIBOSOMAL PROTEIN L6"/>
    <property type="match status" value="1"/>
</dbReference>
<dbReference type="PANTHER" id="PTHR10715:SF0">
    <property type="entry name" value="LARGE RIBOSOMAL SUBUNIT PROTEIN EL6"/>
    <property type="match status" value="1"/>
</dbReference>
<dbReference type="Pfam" id="PF01159">
    <property type="entry name" value="Ribosomal_L6e"/>
    <property type="match status" value="1"/>
</dbReference>
<dbReference type="SUPFAM" id="SSF50104">
    <property type="entry name" value="Translation proteins SH3-like domain"/>
    <property type="match status" value="1"/>
</dbReference>
<dbReference type="PROSITE" id="PS01170">
    <property type="entry name" value="RIBOSOMAL_L6E"/>
    <property type="match status" value="1"/>
</dbReference>
<gene>
    <name evidence="7" type="primary">RPL6A</name>
    <name type="synonym">RPL17A</name>
    <name type="synonym">YL16A</name>
    <name type="ordered locus">YML073C</name>
</gene>
<protein>
    <recommendedName>
        <fullName evidence="6">Large ribosomal subunit protein eL6A</fullName>
    </recommendedName>
    <alternativeName>
        <fullName evidence="7">60S ribosomal protein L6-A</fullName>
    </alternativeName>
    <alternativeName>
        <fullName>L17</fullName>
    </alternativeName>
    <alternativeName>
        <fullName>RP18</fullName>
    </alternativeName>
    <alternativeName>
        <fullName>YL16</fullName>
    </alternativeName>
</protein>
<evidence type="ECO:0000250" key="1">
    <source>
        <dbReference type="UniProtKB" id="P05739"/>
    </source>
</evidence>
<evidence type="ECO:0000269" key="2">
    <source>
    </source>
</evidence>
<evidence type="ECO:0000269" key="3">
    <source>
    </source>
</evidence>
<evidence type="ECO:0000269" key="4">
    <source>
    </source>
</evidence>
<evidence type="ECO:0000269" key="5">
    <source>
    </source>
</evidence>
<evidence type="ECO:0000303" key="6">
    <source>
    </source>
</evidence>
<evidence type="ECO:0000303" key="7">
    <source>
    </source>
</evidence>
<evidence type="ECO:0000305" key="8"/>
<evidence type="ECO:0000305" key="9">
    <source>
    </source>
</evidence>
<evidence type="ECO:0000305" key="10">
    <source>
    </source>
</evidence>
<evidence type="ECO:0007744" key="11">
    <source>
    </source>
</evidence>
<evidence type="ECO:0007829" key="12">
    <source>
        <dbReference type="PDB" id="3JBS"/>
    </source>
</evidence>
<name>RL6A_YEAST</name>
<sequence length="176" mass="19962">MSAQKAPKWYPSEDVAALKKTRKAARPQKLRASLVPGTVLILLAGRFRGKRVVYLKHLEDNTLLISGPFKVNGVPLRRVNARYVIATSTKVSVEGVNVEKFNVEYFAKEKLTKKEKKEANLFPEQQNKEIKAERVEDQKVVDKALIAEIKKTPLLKQYLSASFSLKNGDKPHMLKF</sequence>
<proteinExistence type="evidence at protein level"/>
<reference key="1">
    <citation type="journal article" date="1992" name="Biochim. Biophys. Acta">
        <title>Yeast ribosomal proteins: XIV. Complete nucleotide sequences of the two genes encoding Saccharomyces cerevisiae YL16.</title>
        <authorList>
            <person name="Hashimoto T."/>
            <person name="Suzuki K."/>
            <person name="Mizuta K."/>
            <person name="Otaka E."/>
        </authorList>
    </citation>
    <scope>NUCLEOTIDE SEQUENCE [GENOMIC DNA]</scope>
</reference>
<reference key="2">
    <citation type="journal article" date="1997" name="Nature">
        <title>The nucleotide sequence of Saccharomyces cerevisiae chromosome XIII.</title>
        <authorList>
            <person name="Bowman S."/>
            <person name="Churcher C.M."/>
            <person name="Badcock K."/>
            <person name="Brown D."/>
            <person name="Chillingworth T."/>
            <person name="Connor R."/>
            <person name="Dedman K."/>
            <person name="Devlin K."/>
            <person name="Gentles S."/>
            <person name="Hamlin N."/>
            <person name="Hunt S."/>
            <person name="Jagels K."/>
            <person name="Lye G."/>
            <person name="Moule S."/>
            <person name="Odell C."/>
            <person name="Pearson D."/>
            <person name="Rajandream M.A."/>
            <person name="Rice P."/>
            <person name="Skelton J."/>
            <person name="Walsh S.V."/>
            <person name="Whitehead S."/>
            <person name="Barrell B.G."/>
        </authorList>
    </citation>
    <scope>NUCLEOTIDE SEQUENCE [LARGE SCALE GENOMIC DNA]</scope>
    <source>
        <strain>ATCC 204508 / S288c</strain>
    </source>
</reference>
<reference key="3">
    <citation type="journal article" date="2014" name="G3 (Bethesda)">
        <title>The reference genome sequence of Saccharomyces cerevisiae: Then and now.</title>
        <authorList>
            <person name="Engel S.R."/>
            <person name="Dietrich F.S."/>
            <person name="Fisk D.G."/>
            <person name="Binkley G."/>
            <person name="Balakrishnan R."/>
            <person name="Costanzo M.C."/>
            <person name="Dwight S.S."/>
            <person name="Hitz B.C."/>
            <person name="Karra K."/>
            <person name="Nash R.S."/>
            <person name="Weng S."/>
            <person name="Wong E.D."/>
            <person name="Lloyd P."/>
            <person name="Skrzypek M.S."/>
            <person name="Miyasato S.R."/>
            <person name="Simison M."/>
            <person name="Cherry J.M."/>
        </authorList>
    </citation>
    <scope>GENOME REANNOTATION</scope>
    <source>
        <strain>ATCC 204508 / S288c</strain>
    </source>
</reference>
<reference key="4">
    <citation type="journal article" date="1998" name="Yeast">
        <title>The list of cytoplasmic ribosomal proteins of Saccharomyces cerevisiae.</title>
        <authorList>
            <person name="Planta R.J."/>
            <person name="Mager W.H."/>
        </authorList>
    </citation>
    <scope>NOMENCLATURE</scope>
    <scope>SUBUNIT</scope>
</reference>
<reference key="5">
    <citation type="journal article" date="1999" name="J. Biol. Chem.">
        <title>The action of N-terminal acetyltransferases on yeast ribosomal proteins.</title>
        <authorList>
            <person name="Arnold R.J."/>
            <person name="Polevoda B."/>
            <person name="Reilly J.P."/>
            <person name="Sherman F."/>
        </authorList>
    </citation>
    <scope>CLEAVAGE OF INITIATOR METHIONINE</scope>
    <scope>ACETYLATION AT SER-2 BY NATA</scope>
</reference>
<reference key="6">
    <citation type="journal article" date="2003" name="Nature">
        <title>Global analysis of protein localization in budding yeast.</title>
        <authorList>
            <person name="Huh W.-K."/>
            <person name="Falvo J.V."/>
            <person name="Gerke L.C."/>
            <person name="Carroll A.S."/>
            <person name="Howson R.W."/>
            <person name="Weissman J.S."/>
            <person name="O'Shea E.K."/>
        </authorList>
    </citation>
    <scope>SUBCELLULAR LOCATION [LARGE SCALE ANALYSIS]</scope>
</reference>
<reference key="7">
    <citation type="journal article" date="2003" name="Nature">
        <title>Global analysis of protein expression in yeast.</title>
        <authorList>
            <person name="Ghaemmaghami S."/>
            <person name="Huh W.-K."/>
            <person name="Bower K."/>
            <person name="Howson R.W."/>
            <person name="Belle A."/>
            <person name="Dephoure N."/>
            <person name="O'Shea E.K."/>
            <person name="Weissman J.S."/>
        </authorList>
    </citation>
    <scope>LEVEL OF PROTEIN EXPRESSION [LARGE SCALE ANALYSIS]</scope>
</reference>
<reference key="8">
    <citation type="journal article" date="2008" name="Mol. Cell. Proteomics">
        <title>A multidimensional chromatography technology for in-depth phosphoproteome analysis.</title>
        <authorList>
            <person name="Albuquerque C.P."/>
            <person name="Smolka M.B."/>
            <person name="Payne S.H."/>
            <person name="Bafna V."/>
            <person name="Eng J."/>
            <person name="Zhou H."/>
        </authorList>
    </citation>
    <scope>PHOSPHORYLATION [LARGE SCALE ANALYSIS] AT SER-12</scope>
    <scope>IDENTIFICATION BY MASS SPECTROMETRY [LARGE SCALE ANALYSIS]</scope>
</reference>
<reference key="9">
    <citation type="journal article" date="2012" name="Proteomics">
        <title>Sites of ubiquitin attachment in Saccharomyces cerevisiae.</title>
        <authorList>
            <person name="Starita L.M."/>
            <person name="Lo R.S."/>
            <person name="Eng J.K."/>
            <person name="von Haller P.D."/>
            <person name="Fields S."/>
        </authorList>
    </citation>
    <scope>IDENTIFICATION BY MASS SPECTROMETRY [LARGE SCALE ANALYSIS]</scope>
</reference>
<reference key="10">
    <citation type="journal article" date="2014" name="Curr. Opin. Struct. Biol.">
        <title>A new system for naming ribosomal proteins.</title>
        <authorList>
            <person name="Ban N."/>
            <person name="Beckmann R."/>
            <person name="Cate J.H.D."/>
            <person name="Dinman J.D."/>
            <person name="Dragon F."/>
            <person name="Ellis S.R."/>
            <person name="Lafontaine D.L.J."/>
            <person name="Lindahl L."/>
            <person name="Liljas A."/>
            <person name="Lipton J.M."/>
            <person name="McAlear M.A."/>
            <person name="Moore P.B."/>
            <person name="Noller H.F."/>
            <person name="Ortega J."/>
            <person name="Panse V.G."/>
            <person name="Ramakrishnan V."/>
            <person name="Spahn C.M.T."/>
            <person name="Steitz T.A."/>
            <person name="Tchorzewski M."/>
            <person name="Tollervey D."/>
            <person name="Warren A.J."/>
            <person name="Williamson J.R."/>
            <person name="Wilson D."/>
            <person name="Yonath A."/>
            <person name="Yusupov M."/>
        </authorList>
    </citation>
    <scope>NOMENCLATURE</scope>
</reference>
<reference key="11">
    <citation type="journal article" date="2010" name="Science">
        <title>Crystal structure of the eukaryotic ribosome.</title>
        <authorList>
            <person name="Ben-Shem A."/>
            <person name="Jenner L."/>
            <person name="Yusupova G."/>
            <person name="Yusupov M."/>
        </authorList>
    </citation>
    <scope>X-RAY CRYSTALLOGRAPHY (4.0 ANGSTROMS) OF 80S RIBOSOME</scope>
</reference>
<reference key="12">
    <citation type="journal article" date="2011" name="Science">
        <title>The structure of the eukaryotic ribosome at 3.0 A resolution.</title>
        <authorList>
            <person name="Ben-Shem A."/>
            <person name="Garreau de Loubresse N."/>
            <person name="Melnikov S."/>
            <person name="Jenner L."/>
            <person name="Yusupova G."/>
            <person name="Yusupov M."/>
        </authorList>
    </citation>
    <scope>X-RAY CRYSTALLOGRAPHY (3.0 ANGSTROMS) OF 80S RIBOSOME</scope>
    <scope>SUBUNIT</scope>
    <scope>SUBCELLULAR LOCATION</scope>
</reference>
<feature type="initiator methionine" description="Removed" evidence="2">
    <location>
        <position position="1"/>
    </location>
</feature>
<feature type="chain" id="PRO_0000171017" description="Large ribosomal subunit protein eL6A">
    <location>
        <begin position="2"/>
        <end position="176"/>
    </location>
</feature>
<feature type="modified residue" description="N-acetylserine" evidence="2">
    <location>
        <position position="2"/>
    </location>
</feature>
<feature type="modified residue" description="Phosphoserine" evidence="11">
    <location>
        <position position="12"/>
    </location>
</feature>
<feature type="cross-link" description="Glycyl lysine isopeptide (Lys-Gly) (interchain with G-Cter in ubiquitin)" evidence="1">
    <location>
        <position position="128"/>
    </location>
</feature>
<feature type="strand" evidence="12">
    <location>
        <begin position="38"/>
        <end position="42"/>
    </location>
</feature>
<feature type="turn" evidence="12">
    <location>
        <begin position="46"/>
        <end position="49"/>
    </location>
</feature>
<feature type="strand" evidence="12">
    <location>
        <begin position="51"/>
        <end position="57"/>
    </location>
</feature>
<feature type="strand" evidence="12">
    <location>
        <begin position="63"/>
        <end position="66"/>
    </location>
</feature>
<feature type="helix" evidence="12">
    <location>
        <begin position="69"/>
        <end position="72"/>
    </location>
</feature>
<feature type="strand" evidence="12">
    <location>
        <begin position="76"/>
        <end position="79"/>
    </location>
</feature>
<feature type="helix" evidence="12">
    <location>
        <begin position="81"/>
        <end position="83"/>
    </location>
</feature>
<feature type="strand" evidence="12">
    <location>
        <begin position="84"/>
        <end position="90"/>
    </location>
</feature>
<feature type="turn" evidence="12">
    <location>
        <begin position="103"/>
        <end position="106"/>
    </location>
</feature>
<feature type="helix" evidence="12">
    <location>
        <begin position="113"/>
        <end position="121"/>
    </location>
</feature>
<feature type="helix" evidence="12">
    <location>
        <begin position="123"/>
        <end position="125"/>
    </location>
</feature>
<feature type="helix" evidence="12">
    <location>
        <begin position="132"/>
        <end position="149"/>
    </location>
</feature>
<feature type="helix" evidence="12">
    <location>
        <begin position="155"/>
        <end position="160"/>
    </location>
</feature>
<feature type="turn" evidence="12">
    <location>
        <begin position="171"/>
        <end position="173"/>
    </location>
</feature>
<keyword id="KW-0002">3D-structure</keyword>
<keyword id="KW-0007">Acetylation</keyword>
<keyword id="KW-0963">Cytoplasm</keyword>
<keyword id="KW-1017">Isopeptide bond</keyword>
<keyword id="KW-0597">Phosphoprotein</keyword>
<keyword id="KW-1185">Reference proteome</keyword>
<keyword id="KW-0687">Ribonucleoprotein</keyword>
<keyword id="KW-0689">Ribosomal protein</keyword>
<keyword id="KW-0832">Ubl conjugation</keyword>